<reference key="1">
    <citation type="journal article" date="1998" name="J. Bacteriol.">
        <title>Penicillin-binding protein 1 of Staphylococcus aureus is essential for growth.</title>
        <authorList>
            <person name="Wada A."/>
            <person name="Watanabe H."/>
        </authorList>
    </citation>
    <scope>NUCLEOTIDE SEQUENCE [GENOMIC DNA]</scope>
</reference>
<reference key="2">
    <citation type="book" date="2006" name="Gram positive pathogens, 2nd edition">
        <title>The Staphylococcus aureus NCTC 8325 genome.</title>
        <editorList>
            <person name="Fischetti V."/>
            <person name="Novick R."/>
            <person name="Ferretti J."/>
            <person name="Portnoy D."/>
            <person name="Rood J."/>
        </editorList>
        <authorList>
            <person name="Gillaspy A.F."/>
            <person name="Worrell V."/>
            <person name="Orvis J."/>
            <person name="Roe B.A."/>
            <person name="Dyer D.W."/>
            <person name="Iandolo J.J."/>
        </authorList>
    </citation>
    <scope>NUCLEOTIDE SEQUENCE [LARGE SCALE GENOMIC DNA]</scope>
    <source>
        <strain>NCTC 8325 / PS 47</strain>
    </source>
</reference>
<accession>P0A0H0</accession>
<accession>P48942</accession>
<accession>Q2G0N3</accession>
<evidence type="ECO:0000250" key="1"/>
<evidence type="ECO:0000255" key="2">
    <source>
        <dbReference type="HAMAP-Rule" id="MF_00403"/>
    </source>
</evidence>
<evidence type="ECO:0000256" key="3">
    <source>
        <dbReference type="SAM" id="MobiDB-lite"/>
    </source>
</evidence>
<evidence type="ECO:0000305" key="4"/>
<evidence type="ECO:0007829" key="5">
    <source>
        <dbReference type="PDB" id="7BGD"/>
    </source>
</evidence>
<evidence type="ECO:0007829" key="6">
    <source>
        <dbReference type="PDB" id="8BYV"/>
    </source>
</evidence>
<protein>
    <recommendedName>
        <fullName evidence="2">Small ribosomal subunit protein uS12</fullName>
    </recommendedName>
    <alternativeName>
        <fullName evidence="4">30S ribosomal protein S12</fullName>
    </alternativeName>
</protein>
<name>RS12_STAA8</name>
<dbReference type="EMBL" id="U20869">
    <property type="protein sequence ID" value="AAC46353.1"/>
    <property type="molecule type" value="Genomic_DNA"/>
</dbReference>
<dbReference type="EMBL" id="CP000253">
    <property type="protein sequence ID" value="ABD29675.1"/>
    <property type="molecule type" value="Genomic_DNA"/>
</dbReference>
<dbReference type="RefSeq" id="WP_001142337.1">
    <property type="nucleotide sequence ID" value="NZ_LS483365.1"/>
</dbReference>
<dbReference type="RefSeq" id="YP_499099.1">
    <property type="nucleotide sequence ID" value="NC_007795.1"/>
</dbReference>
<dbReference type="PDB" id="5LI0">
    <property type="method" value="EM"/>
    <property type="resolution" value="3.80 A"/>
    <property type="chains" value="l=2-136"/>
</dbReference>
<dbReference type="PDB" id="5ND8">
    <property type="method" value="EM"/>
    <property type="resolution" value="3.70 A"/>
    <property type="chains" value="l=1-137"/>
</dbReference>
<dbReference type="PDB" id="5ND9">
    <property type="method" value="EM"/>
    <property type="resolution" value="3.70 A"/>
    <property type="chains" value="l=1-137"/>
</dbReference>
<dbReference type="PDB" id="5TCU">
    <property type="method" value="EM"/>
    <property type="resolution" value="3.90 A"/>
    <property type="chains" value="S3=2-137"/>
</dbReference>
<dbReference type="PDB" id="6YEF">
    <property type="method" value="EM"/>
    <property type="resolution" value="3.20 A"/>
    <property type="chains" value="l=1-137"/>
</dbReference>
<dbReference type="PDB" id="7BGD">
    <property type="method" value="EM"/>
    <property type="resolution" value="3.20 A"/>
    <property type="chains" value="l=1-137"/>
</dbReference>
<dbReference type="PDB" id="7KWG">
    <property type="method" value="EM"/>
    <property type="resolution" value="3.75 A"/>
    <property type="chains" value="l=1-137"/>
</dbReference>
<dbReference type="PDB" id="7NHL">
    <property type="method" value="EM"/>
    <property type="resolution" value="3.10 A"/>
    <property type="chains" value="m=1-137"/>
</dbReference>
<dbReference type="PDB" id="7NHM">
    <property type="method" value="EM"/>
    <property type="resolution" value="3.10 A"/>
    <property type="chains" value="m=1-137"/>
</dbReference>
<dbReference type="PDB" id="8BYV">
    <property type="method" value="EM"/>
    <property type="resolution" value="2.89 A"/>
    <property type="chains" value="l=1-137"/>
</dbReference>
<dbReference type="PDB" id="8P2F">
    <property type="method" value="EM"/>
    <property type="resolution" value="2.44 A"/>
    <property type="chains" value="m=1-137"/>
</dbReference>
<dbReference type="PDB" id="8P2G">
    <property type="method" value="EM"/>
    <property type="resolution" value="2.02 A"/>
    <property type="chains" value="m=1-137"/>
</dbReference>
<dbReference type="PDB" id="8P2H">
    <property type="method" value="EM"/>
    <property type="resolution" value="2.49 A"/>
    <property type="chains" value="m=1-137"/>
</dbReference>
<dbReference type="PDB" id="8Y38">
    <property type="method" value="EM"/>
    <property type="resolution" value="2.58 A"/>
    <property type="chains" value="l=1-137"/>
</dbReference>
<dbReference type="PDB" id="8Y39">
    <property type="method" value="EM"/>
    <property type="resolution" value="3.60 A"/>
    <property type="chains" value="l=1-137"/>
</dbReference>
<dbReference type="PDBsum" id="5LI0"/>
<dbReference type="PDBsum" id="5ND8"/>
<dbReference type="PDBsum" id="5ND9"/>
<dbReference type="PDBsum" id="5TCU"/>
<dbReference type="PDBsum" id="6YEF"/>
<dbReference type="PDBsum" id="7BGD"/>
<dbReference type="PDBsum" id="7KWG"/>
<dbReference type="PDBsum" id="7NHL"/>
<dbReference type="PDBsum" id="7NHM"/>
<dbReference type="PDBsum" id="8BYV"/>
<dbReference type="PDBsum" id="8P2F"/>
<dbReference type="PDBsum" id="8P2G"/>
<dbReference type="PDBsum" id="8P2H"/>
<dbReference type="PDBsum" id="8Y38"/>
<dbReference type="PDBsum" id="8Y39"/>
<dbReference type="EMDB" id="EMD-10791"/>
<dbReference type="EMDB" id="EMD-12178"/>
<dbReference type="EMDB" id="EMD-12332"/>
<dbReference type="EMDB" id="EMD-12333"/>
<dbReference type="EMDB" id="EMD-16334"/>
<dbReference type="EMDB" id="EMD-17363"/>
<dbReference type="EMDB" id="EMD-17364"/>
<dbReference type="EMDB" id="EMD-17365"/>
<dbReference type="EMDB" id="EMD-23052"/>
<dbReference type="EMDB" id="EMD-3624"/>
<dbReference type="EMDB" id="EMD-3625"/>
<dbReference type="EMDB" id="EMD-8402"/>
<dbReference type="SMR" id="P0A0H0"/>
<dbReference type="STRING" id="93061.SAOUHSC_00527"/>
<dbReference type="PaxDb" id="1280-SAXN108_0599"/>
<dbReference type="GeneID" id="3920380"/>
<dbReference type="GeneID" id="98344879"/>
<dbReference type="KEGG" id="sao:SAOUHSC_00527"/>
<dbReference type="PATRIC" id="fig|93061.5.peg.473"/>
<dbReference type="eggNOG" id="COG0048">
    <property type="taxonomic scope" value="Bacteria"/>
</dbReference>
<dbReference type="HOGENOM" id="CLU_104295_1_2_9"/>
<dbReference type="OrthoDB" id="9802366at2"/>
<dbReference type="PRO" id="PR:P0A0H0"/>
<dbReference type="Proteomes" id="UP000008816">
    <property type="component" value="Chromosome"/>
</dbReference>
<dbReference type="GO" id="GO:0005840">
    <property type="term" value="C:ribosome"/>
    <property type="evidence" value="ECO:0000318"/>
    <property type="project" value="GO_Central"/>
</dbReference>
<dbReference type="GO" id="GO:0015935">
    <property type="term" value="C:small ribosomal subunit"/>
    <property type="evidence" value="ECO:0007669"/>
    <property type="project" value="InterPro"/>
</dbReference>
<dbReference type="GO" id="GO:0019843">
    <property type="term" value="F:rRNA binding"/>
    <property type="evidence" value="ECO:0007669"/>
    <property type="project" value="UniProtKB-UniRule"/>
</dbReference>
<dbReference type="GO" id="GO:0003735">
    <property type="term" value="F:structural constituent of ribosome"/>
    <property type="evidence" value="ECO:0000318"/>
    <property type="project" value="GO_Central"/>
</dbReference>
<dbReference type="GO" id="GO:0000049">
    <property type="term" value="F:tRNA binding"/>
    <property type="evidence" value="ECO:0007669"/>
    <property type="project" value="UniProtKB-UniRule"/>
</dbReference>
<dbReference type="GO" id="GO:0006412">
    <property type="term" value="P:translation"/>
    <property type="evidence" value="ECO:0000318"/>
    <property type="project" value="GO_Central"/>
</dbReference>
<dbReference type="CDD" id="cd03368">
    <property type="entry name" value="Ribosomal_S12"/>
    <property type="match status" value="1"/>
</dbReference>
<dbReference type="FunFam" id="2.40.50.140:FF:000001">
    <property type="entry name" value="30S ribosomal protein S12"/>
    <property type="match status" value="1"/>
</dbReference>
<dbReference type="Gene3D" id="2.40.50.140">
    <property type="entry name" value="Nucleic acid-binding proteins"/>
    <property type="match status" value="1"/>
</dbReference>
<dbReference type="HAMAP" id="MF_00403_B">
    <property type="entry name" value="Ribosomal_uS12_B"/>
    <property type="match status" value="1"/>
</dbReference>
<dbReference type="InterPro" id="IPR012340">
    <property type="entry name" value="NA-bd_OB-fold"/>
</dbReference>
<dbReference type="InterPro" id="IPR006032">
    <property type="entry name" value="Ribosomal_uS12"/>
</dbReference>
<dbReference type="InterPro" id="IPR005679">
    <property type="entry name" value="Ribosomal_uS12_bac"/>
</dbReference>
<dbReference type="NCBIfam" id="TIGR00981">
    <property type="entry name" value="rpsL_bact"/>
    <property type="match status" value="1"/>
</dbReference>
<dbReference type="PANTHER" id="PTHR11652">
    <property type="entry name" value="30S RIBOSOMAL PROTEIN S12 FAMILY MEMBER"/>
    <property type="match status" value="1"/>
</dbReference>
<dbReference type="Pfam" id="PF00164">
    <property type="entry name" value="Ribosom_S12_S23"/>
    <property type="match status" value="1"/>
</dbReference>
<dbReference type="PIRSF" id="PIRSF002133">
    <property type="entry name" value="Ribosomal_S12/S23"/>
    <property type="match status" value="1"/>
</dbReference>
<dbReference type="PRINTS" id="PR01034">
    <property type="entry name" value="RIBOSOMALS12"/>
</dbReference>
<dbReference type="SUPFAM" id="SSF50249">
    <property type="entry name" value="Nucleic acid-binding proteins"/>
    <property type="match status" value="1"/>
</dbReference>
<dbReference type="PROSITE" id="PS00055">
    <property type="entry name" value="RIBOSOMAL_S12"/>
    <property type="match status" value="1"/>
</dbReference>
<proteinExistence type="evidence at protein level"/>
<comment type="function">
    <text evidence="2">With S4 and S5 plays an important role in translational accuracy.</text>
</comment>
<comment type="function">
    <text evidence="2">Interacts with and stabilizes bases of the 16S rRNA that are involved in tRNA selection in the A site and with the mRNA backbone. Located at the interface of the 30S and 50S subunits, it traverses the body of the 30S subunit contacting proteins on the other side and probably holding the rRNA structure together. The combined cluster of proteins S8, S12 and S17 appears to hold together the shoulder and platform of the 30S subunit.</text>
</comment>
<comment type="subunit">
    <text evidence="2">Part of the 30S ribosomal subunit. Contacts proteins S8 and S17. May interact with IF1 in the 30S initiation complex.</text>
</comment>
<comment type="similarity">
    <text evidence="2">Belongs to the universal ribosomal protein uS12 family.</text>
</comment>
<keyword id="KW-0002">3D-structure</keyword>
<keyword id="KW-0488">Methylation</keyword>
<keyword id="KW-1185">Reference proteome</keyword>
<keyword id="KW-0687">Ribonucleoprotein</keyword>
<keyword id="KW-0689">Ribosomal protein</keyword>
<keyword id="KW-0694">RNA-binding</keyword>
<keyword id="KW-0699">rRNA-binding</keyword>
<keyword id="KW-0820">tRNA-binding</keyword>
<sequence length="137" mass="15287">MPTINQLVRKPRQSKIKKSDSPALNKGFNSKKKKFTDLNSPQKRGVCTRVGTMTPKKPNSALRKYARVRLSNNIEINAYIPGIGHNLQEHSVVLVRGGRVKDLPGVRYHIVRGALDTSGVDGRRQGRSLYGTKKPKN</sequence>
<gene>
    <name evidence="2" type="primary">rpsL</name>
    <name type="ordered locus">SAOUHSC_00527</name>
</gene>
<organism>
    <name type="scientific">Staphylococcus aureus (strain NCTC 8325 / PS 47)</name>
    <dbReference type="NCBI Taxonomy" id="93061"/>
    <lineage>
        <taxon>Bacteria</taxon>
        <taxon>Bacillati</taxon>
        <taxon>Bacillota</taxon>
        <taxon>Bacilli</taxon>
        <taxon>Bacillales</taxon>
        <taxon>Staphylococcaceae</taxon>
        <taxon>Staphylococcus</taxon>
    </lineage>
</organism>
<feature type="chain" id="PRO_0000146312" description="Small ribosomal subunit protein uS12">
    <location>
        <begin position="1"/>
        <end position="137"/>
    </location>
</feature>
<feature type="region of interest" description="Disordered" evidence="3">
    <location>
        <begin position="1"/>
        <end position="55"/>
    </location>
</feature>
<feature type="region of interest" description="Disordered" evidence="3">
    <location>
        <begin position="118"/>
        <end position="137"/>
    </location>
</feature>
<feature type="modified residue" description="3-methylthioaspartic acid" evidence="1">
    <location>
        <position position="102"/>
    </location>
</feature>
<feature type="helix" evidence="6">
    <location>
        <begin position="4"/>
        <end position="8"/>
    </location>
</feature>
<feature type="turn" evidence="6">
    <location>
        <begin position="22"/>
        <end position="24"/>
    </location>
</feature>
<feature type="strand" evidence="6">
    <location>
        <begin position="27"/>
        <end position="29"/>
    </location>
</feature>
<feature type="turn" evidence="6">
    <location>
        <begin position="30"/>
        <end position="33"/>
    </location>
</feature>
<feature type="strand" evidence="6">
    <location>
        <begin position="34"/>
        <end position="36"/>
    </location>
</feature>
<feature type="strand" evidence="6">
    <location>
        <begin position="43"/>
        <end position="53"/>
    </location>
</feature>
<feature type="strand" evidence="6">
    <location>
        <begin position="63"/>
        <end position="70"/>
    </location>
</feature>
<feature type="strand" evidence="6">
    <location>
        <begin position="75"/>
        <end position="79"/>
    </location>
</feature>
<feature type="strand" evidence="6">
    <location>
        <begin position="92"/>
        <end position="95"/>
    </location>
</feature>
<feature type="strand" evidence="5">
    <location>
        <begin position="101"/>
        <end position="105"/>
    </location>
</feature>
<feature type="strand" evidence="6">
    <location>
        <begin position="106"/>
        <end position="110"/>
    </location>
</feature>
<feature type="strand" evidence="6">
    <location>
        <begin position="114"/>
        <end position="116"/>
    </location>
</feature>
<feature type="strand" evidence="6">
    <location>
        <begin position="124"/>
        <end position="126"/>
    </location>
</feature>
<feature type="helix" evidence="6">
    <location>
        <begin position="128"/>
        <end position="130"/>
    </location>
</feature>